<sequence>EQFEDYGHMRF</sequence>
<proteinExistence type="evidence at protein level"/>
<organism>
    <name type="scientific">Blaberus craniifer</name>
    <name type="common">Death's head cockroach</name>
    <dbReference type="NCBI Taxonomy" id="6982"/>
    <lineage>
        <taxon>Eukaryota</taxon>
        <taxon>Metazoa</taxon>
        <taxon>Ecdysozoa</taxon>
        <taxon>Arthropoda</taxon>
        <taxon>Hexapoda</taxon>
        <taxon>Insecta</taxon>
        <taxon>Pterygota</taxon>
        <taxon>Neoptera</taxon>
        <taxon>Polyneoptera</taxon>
        <taxon>Dictyoptera</taxon>
        <taxon>Blattodea</taxon>
        <taxon>Blaberoidea</taxon>
        <taxon>Blaberidae</taxon>
        <taxon>Blaberinae</taxon>
        <taxon>Blaberus</taxon>
    </lineage>
</organism>
<feature type="peptide" id="PRO_0000378861" description="Sulfakinin-1" evidence="3">
    <location>
        <begin position="1"/>
        <end position="11"/>
    </location>
</feature>
<feature type="modified residue" description="Sulfotyrosine" evidence="1">
    <location>
        <position position="6"/>
    </location>
</feature>
<feature type="modified residue" description="Phenylalanine amide" evidence="3">
    <location>
        <position position="11"/>
    </location>
</feature>
<name>SK1_BLACR</name>
<evidence type="ECO:0000250" key="1">
    <source>
        <dbReference type="UniProtKB" id="P41493"/>
    </source>
</evidence>
<evidence type="ECO:0000255" key="2"/>
<evidence type="ECO:0000269" key="3">
    <source>
    </source>
</evidence>
<evidence type="ECO:0000303" key="4">
    <source>
    </source>
</evidence>
<evidence type="ECO:0000305" key="5"/>
<keyword id="KW-0027">Amidation</keyword>
<keyword id="KW-0903">Direct protein sequencing</keyword>
<keyword id="KW-0372">Hormone</keyword>
<keyword id="KW-0527">Neuropeptide</keyword>
<keyword id="KW-0964">Secreted</keyword>
<keyword id="KW-0765">Sulfation</keyword>
<comment type="function">
    <text evidence="1">Myotropic peptide.</text>
</comment>
<comment type="subcellular location">
    <subcellularLocation>
        <location evidence="5">Secreted</location>
    </subcellularLocation>
</comment>
<comment type="similarity">
    <text evidence="2">Belongs to the gastrin/cholecystokinin family.</text>
</comment>
<reference evidence="5" key="1">
    <citation type="journal article" date="2009" name="BMC Evol. Biol.">
        <title>A proteomic approach for studying insect phylogeny: CAPA peptides of ancient insect taxa (Dictyoptera, Blattoptera) as a test case.</title>
        <authorList>
            <person name="Roth S."/>
            <person name="Fromm B."/>
            <person name="Gaede G."/>
            <person name="Predel R."/>
        </authorList>
    </citation>
    <scope>PROTEIN SEQUENCE</scope>
    <scope>AMIDATION AT PHE-11</scope>
    <source>
        <tissue evidence="3">Corpora cardiaca</tissue>
    </source>
</reference>
<dbReference type="GO" id="GO:0005576">
    <property type="term" value="C:extracellular region"/>
    <property type="evidence" value="ECO:0007669"/>
    <property type="project" value="UniProtKB-SubCell"/>
</dbReference>
<dbReference type="GO" id="GO:0005179">
    <property type="term" value="F:hormone activity"/>
    <property type="evidence" value="ECO:0007669"/>
    <property type="project" value="UniProtKB-KW"/>
</dbReference>
<dbReference type="GO" id="GO:0007218">
    <property type="term" value="P:neuropeptide signaling pathway"/>
    <property type="evidence" value="ECO:0007669"/>
    <property type="project" value="UniProtKB-KW"/>
</dbReference>
<dbReference type="InterPro" id="IPR013152">
    <property type="entry name" value="Gastrin/cholecystokinin_CS"/>
</dbReference>
<dbReference type="InterPro" id="IPR013259">
    <property type="entry name" value="Sulfakinin"/>
</dbReference>
<dbReference type="Pfam" id="PF08257">
    <property type="entry name" value="Sulfakinin"/>
    <property type="match status" value="1"/>
</dbReference>
<dbReference type="PROSITE" id="PS00259">
    <property type="entry name" value="GASTRIN"/>
    <property type="match status" value="1"/>
</dbReference>
<protein>
    <recommendedName>
        <fullName evidence="4">Sulfakinin-1</fullName>
        <shortName evidence="4">BlaCr-SK-1</shortName>
    </recommendedName>
</protein>
<accession>P85547</accession>